<keyword id="KW-0456">Lyase</keyword>
<keyword id="KW-0663">Pyridoxal phosphate</keyword>
<evidence type="ECO:0000255" key="1">
    <source>
        <dbReference type="HAMAP-Rule" id="MF_01045"/>
    </source>
</evidence>
<accession>A7FJ17</accession>
<organism>
    <name type="scientific">Yersinia pseudotuberculosis serotype O:1b (strain IP 31758)</name>
    <dbReference type="NCBI Taxonomy" id="349747"/>
    <lineage>
        <taxon>Bacteria</taxon>
        <taxon>Pseudomonadati</taxon>
        <taxon>Pseudomonadota</taxon>
        <taxon>Gammaproteobacteria</taxon>
        <taxon>Enterobacterales</taxon>
        <taxon>Yersiniaceae</taxon>
        <taxon>Yersinia</taxon>
    </lineage>
</organism>
<proteinExistence type="inferred from homology"/>
<name>DCYD_YERP3</name>
<feature type="chain" id="PRO_1000064270" description="D-cysteine desulfhydrase">
    <location>
        <begin position="1"/>
        <end position="330"/>
    </location>
</feature>
<feature type="modified residue" description="N6-(pyridoxal phosphate)lysine" evidence="1">
    <location>
        <position position="52"/>
    </location>
</feature>
<protein>
    <recommendedName>
        <fullName evidence="1">D-cysteine desulfhydrase</fullName>
        <ecNumber evidence="1">4.4.1.15</ecNumber>
    </recommendedName>
</protein>
<gene>
    <name evidence="1" type="primary">dcyD</name>
    <name type="ordered locus">YpsIP31758_2275</name>
</gene>
<sequence>MTLQHKLTQFPRLDLVGNATPLEKLSRLSDYLGREIYIKRDDVTPVALGGNKLRKLEFLAADALRQGADTLVTAGAIQSNHVRQTAAVAAKLGLHCVALLENPIGTEQANYLTNGNRLLLDLFNVDVVMCEALNDPNQQLAELATRVEAQGFRPYVVPIGGSNALGALGYVQCSLEIAAQAAGNVAFSSVVVASGSAGTHAGLAVGLQQLLPDAELIGVTVSRSADEQRPKVAQIQQALATSLGMTDPLAKITLWDSYFAPQYGMPNEEGIAAIKLLARLEGILLDPVYTGKAMAGLLDGIEQQKFCDKGPILFIHTGGAPALFAYHPQV</sequence>
<reference key="1">
    <citation type="journal article" date="2007" name="PLoS Genet.">
        <title>The complete genome sequence of Yersinia pseudotuberculosis IP31758, the causative agent of Far East scarlet-like fever.</title>
        <authorList>
            <person name="Eppinger M."/>
            <person name="Rosovitz M.J."/>
            <person name="Fricke W.F."/>
            <person name="Rasko D.A."/>
            <person name="Kokorina G."/>
            <person name="Fayolle C."/>
            <person name="Lindler L.E."/>
            <person name="Carniel E."/>
            <person name="Ravel J."/>
        </authorList>
    </citation>
    <scope>NUCLEOTIDE SEQUENCE [LARGE SCALE GENOMIC DNA]</scope>
    <source>
        <strain>IP 31758</strain>
    </source>
</reference>
<dbReference type="EC" id="4.4.1.15" evidence="1"/>
<dbReference type="EMBL" id="CP000720">
    <property type="protein sequence ID" value="ABS49548.1"/>
    <property type="molecule type" value="Genomic_DNA"/>
</dbReference>
<dbReference type="RefSeq" id="WP_011192189.1">
    <property type="nucleotide sequence ID" value="NC_009708.1"/>
</dbReference>
<dbReference type="SMR" id="A7FJ17"/>
<dbReference type="KEGG" id="ypi:YpsIP31758_2275"/>
<dbReference type="HOGENOM" id="CLU_048897_1_0_6"/>
<dbReference type="Proteomes" id="UP000002412">
    <property type="component" value="Chromosome"/>
</dbReference>
<dbReference type="GO" id="GO:0019148">
    <property type="term" value="F:D-cysteine desulfhydrase activity"/>
    <property type="evidence" value="ECO:0007669"/>
    <property type="project" value="UniProtKB-UniRule"/>
</dbReference>
<dbReference type="GO" id="GO:0046416">
    <property type="term" value="P:D-amino acid metabolic process"/>
    <property type="evidence" value="ECO:0007669"/>
    <property type="project" value="UniProtKB-UniRule"/>
</dbReference>
<dbReference type="CDD" id="cd06449">
    <property type="entry name" value="ACCD"/>
    <property type="match status" value="1"/>
</dbReference>
<dbReference type="FunFam" id="3.40.50.1100:FF:000017">
    <property type="entry name" value="D-cysteine desulfhydrase"/>
    <property type="match status" value="1"/>
</dbReference>
<dbReference type="Gene3D" id="3.40.50.1100">
    <property type="match status" value="2"/>
</dbReference>
<dbReference type="HAMAP" id="MF_01045">
    <property type="entry name" value="D_Cys_desulfhydr"/>
    <property type="match status" value="1"/>
</dbReference>
<dbReference type="InterPro" id="IPR027278">
    <property type="entry name" value="ACCD_DCysDesulf"/>
</dbReference>
<dbReference type="InterPro" id="IPR005966">
    <property type="entry name" value="D-Cys_desShydrase"/>
</dbReference>
<dbReference type="InterPro" id="IPR023702">
    <property type="entry name" value="D_Cys_desulphydr_bac"/>
</dbReference>
<dbReference type="InterPro" id="IPR001926">
    <property type="entry name" value="TrpB-like_PALP"/>
</dbReference>
<dbReference type="InterPro" id="IPR036052">
    <property type="entry name" value="TrpB-like_PALP_sf"/>
</dbReference>
<dbReference type="NCBIfam" id="TIGR01275">
    <property type="entry name" value="ACC_deam_rel"/>
    <property type="match status" value="1"/>
</dbReference>
<dbReference type="NCBIfam" id="NF003030">
    <property type="entry name" value="PRK03910.1-3"/>
    <property type="match status" value="1"/>
</dbReference>
<dbReference type="NCBIfam" id="NF003032">
    <property type="entry name" value="PRK03910.1-5"/>
    <property type="match status" value="1"/>
</dbReference>
<dbReference type="PANTHER" id="PTHR43780">
    <property type="entry name" value="1-AMINOCYCLOPROPANE-1-CARBOXYLATE DEAMINASE-RELATED"/>
    <property type="match status" value="1"/>
</dbReference>
<dbReference type="PANTHER" id="PTHR43780:SF2">
    <property type="entry name" value="1-AMINOCYCLOPROPANE-1-CARBOXYLATE DEAMINASE-RELATED"/>
    <property type="match status" value="1"/>
</dbReference>
<dbReference type="Pfam" id="PF00291">
    <property type="entry name" value="PALP"/>
    <property type="match status" value="1"/>
</dbReference>
<dbReference type="PIRSF" id="PIRSF006278">
    <property type="entry name" value="ACCD_DCysDesulf"/>
    <property type="match status" value="1"/>
</dbReference>
<dbReference type="SUPFAM" id="SSF53686">
    <property type="entry name" value="Tryptophan synthase beta subunit-like PLP-dependent enzymes"/>
    <property type="match status" value="1"/>
</dbReference>
<comment type="function">
    <text evidence="1">Catalyzes the alpha,beta-elimination reaction of D-cysteine and of several D-cysteine derivatives. It could be a defense mechanism against D-cysteine.</text>
</comment>
<comment type="catalytic activity">
    <reaction evidence="1">
        <text>D-cysteine + H2O = hydrogen sulfide + pyruvate + NH4(+) + H(+)</text>
        <dbReference type="Rhea" id="RHEA:11268"/>
        <dbReference type="ChEBI" id="CHEBI:15361"/>
        <dbReference type="ChEBI" id="CHEBI:15377"/>
        <dbReference type="ChEBI" id="CHEBI:15378"/>
        <dbReference type="ChEBI" id="CHEBI:28938"/>
        <dbReference type="ChEBI" id="CHEBI:29919"/>
        <dbReference type="ChEBI" id="CHEBI:35236"/>
        <dbReference type="EC" id="4.4.1.15"/>
    </reaction>
</comment>
<comment type="cofactor">
    <cofactor evidence="1">
        <name>pyridoxal 5'-phosphate</name>
        <dbReference type="ChEBI" id="CHEBI:597326"/>
    </cofactor>
</comment>
<comment type="subunit">
    <text evidence="1">Homodimer.</text>
</comment>
<comment type="similarity">
    <text evidence="1">Belongs to the ACC deaminase/D-cysteine desulfhydrase family.</text>
</comment>